<dbReference type="EC" id="7.1.1.9"/>
<dbReference type="EMBL" id="X61010">
    <property type="protein sequence ID" value="CAA43340.1"/>
    <property type="molecule type" value="Genomic_DNA"/>
</dbReference>
<dbReference type="PIR" id="S36009">
    <property type="entry name" value="S36009"/>
</dbReference>
<dbReference type="RefSeq" id="NP_007085.1">
    <property type="nucleotide sequence ID" value="NC_001606.1"/>
</dbReference>
<dbReference type="SMR" id="P24987"/>
<dbReference type="GeneID" id="807772"/>
<dbReference type="KEGG" id="ccar:807772"/>
<dbReference type="CTD" id="4513"/>
<dbReference type="OMA" id="WSYEYTD"/>
<dbReference type="OrthoDB" id="539285at2759"/>
<dbReference type="Proteomes" id="UP000694384">
    <property type="component" value="Unplaced"/>
</dbReference>
<dbReference type="Proteomes" id="UP000694427">
    <property type="component" value="Unplaced"/>
</dbReference>
<dbReference type="Proteomes" id="UP000694700">
    <property type="component" value="Unplaced"/>
</dbReference>
<dbReference type="Proteomes" id="UP000694701">
    <property type="component" value="Unplaced"/>
</dbReference>
<dbReference type="Proteomes" id="UP001155660">
    <property type="component" value="Mitochondrion MT"/>
</dbReference>
<dbReference type="GO" id="GO:0005743">
    <property type="term" value="C:mitochondrial inner membrane"/>
    <property type="evidence" value="ECO:0007669"/>
    <property type="project" value="UniProtKB-SubCell"/>
</dbReference>
<dbReference type="GO" id="GO:0045277">
    <property type="term" value="C:respiratory chain complex IV"/>
    <property type="evidence" value="ECO:0000250"/>
    <property type="project" value="UniProtKB"/>
</dbReference>
<dbReference type="GO" id="GO:0005507">
    <property type="term" value="F:copper ion binding"/>
    <property type="evidence" value="ECO:0007669"/>
    <property type="project" value="InterPro"/>
</dbReference>
<dbReference type="GO" id="GO:0004129">
    <property type="term" value="F:cytochrome-c oxidase activity"/>
    <property type="evidence" value="ECO:0007669"/>
    <property type="project" value="UniProtKB-EC"/>
</dbReference>
<dbReference type="GO" id="GO:0042773">
    <property type="term" value="P:ATP synthesis coupled electron transport"/>
    <property type="evidence" value="ECO:0007669"/>
    <property type="project" value="TreeGrafter"/>
</dbReference>
<dbReference type="CDD" id="cd13912">
    <property type="entry name" value="CcO_II_C"/>
    <property type="match status" value="1"/>
</dbReference>
<dbReference type="FunFam" id="1.10.287.90:FF:000001">
    <property type="entry name" value="Cytochrome c oxidase subunit 2"/>
    <property type="match status" value="1"/>
</dbReference>
<dbReference type="FunFam" id="2.60.40.420:FF:000001">
    <property type="entry name" value="Cytochrome c oxidase subunit 2"/>
    <property type="match status" value="1"/>
</dbReference>
<dbReference type="Gene3D" id="1.10.287.90">
    <property type="match status" value="1"/>
</dbReference>
<dbReference type="Gene3D" id="2.60.40.420">
    <property type="entry name" value="Cupredoxins - blue copper proteins"/>
    <property type="match status" value="1"/>
</dbReference>
<dbReference type="InterPro" id="IPR045187">
    <property type="entry name" value="CcO_II"/>
</dbReference>
<dbReference type="InterPro" id="IPR002429">
    <property type="entry name" value="CcO_II-like_C"/>
</dbReference>
<dbReference type="InterPro" id="IPR034210">
    <property type="entry name" value="CcO_II_C"/>
</dbReference>
<dbReference type="InterPro" id="IPR001505">
    <property type="entry name" value="Copper_CuA"/>
</dbReference>
<dbReference type="InterPro" id="IPR008972">
    <property type="entry name" value="Cupredoxin"/>
</dbReference>
<dbReference type="InterPro" id="IPR014222">
    <property type="entry name" value="Cyt_c_oxidase_su2"/>
</dbReference>
<dbReference type="InterPro" id="IPR011759">
    <property type="entry name" value="Cyt_c_oxidase_su2_TM_dom"/>
</dbReference>
<dbReference type="InterPro" id="IPR036257">
    <property type="entry name" value="Cyt_c_oxidase_su2_TM_sf"/>
</dbReference>
<dbReference type="NCBIfam" id="TIGR02866">
    <property type="entry name" value="CoxB"/>
    <property type="match status" value="1"/>
</dbReference>
<dbReference type="PANTHER" id="PTHR22888:SF9">
    <property type="entry name" value="CYTOCHROME C OXIDASE SUBUNIT 2"/>
    <property type="match status" value="1"/>
</dbReference>
<dbReference type="PANTHER" id="PTHR22888">
    <property type="entry name" value="CYTOCHROME C OXIDASE, SUBUNIT II"/>
    <property type="match status" value="1"/>
</dbReference>
<dbReference type="Pfam" id="PF00116">
    <property type="entry name" value="COX2"/>
    <property type="match status" value="1"/>
</dbReference>
<dbReference type="Pfam" id="PF02790">
    <property type="entry name" value="COX2_TM"/>
    <property type="match status" value="1"/>
</dbReference>
<dbReference type="PRINTS" id="PR01166">
    <property type="entry name" value="CYCOXIDASEII"/>
</dbReference>
<dbReference type="SUPFAM" id="SSF49503">
    <property type="entry name" value="Cupredoxins"/>
    <property type="match status" value="1"/>
</dbReference>
<dbReference type="SUPFAM" id="SSF81464">
    <property type="entry name" value="Cytochrome c oxidase subunit II-like, transmembrane region"/>
    <property type="match status" value="1"/>
</dbReference>
<dbReference type="PROSITE" id="PS00078">
    <property type="entry name" value="COX2"/>
    <property type="match status" value="1"/>
</dbReference>
<dbReference type="PROSITE" id="PS50857">
    <property type="entry name" value="COX2_CUA"/>
    <property type="match status" value="1"/>
</dbReference>
<dbReference type="PROSITE" id="PS50999">
    <property type="entry name" value="COX2_TM"/>
    <property type="match status" value="1"/>
</dbReference>
<sequence>MAHPTQLGFKDAAMPVMEELLHFHDHALMIVLLISTLVLYIITAMVSTKLTNKYILDSQEIEIVWTILPAVILVLIALPSLRILYLMDEINDPHLTIKAMGHQWYWSYEYTDYENLGFDSYMVPTQDLAPGQFRLLETDHRMVVPMESPVRVLVSAEDVLHSWAVPSLGVKMDAVPGRLNQAAFIASRPGVFYGQCSEICGANHSFMPIVVEAVPLEHFENWSSLMLEDA</sequence>
<gene>
    <name type="primary">mt-co2</name>
    <name type="synonym">coii</name>
    <name type="synonym">coxii</name>
    <name type="synonym">mtco2</name>
</gene>
<feature type="chain" id="PRO_0000183564" description="Cytochrome c oxidase subunit 2">
    <location>
        <begin position="1"/>
        <end position="230"/>
    </location>
</feature>
<feature type="topological domain" description="Mitochondrial intermembrane" evidence="3">
    <location>
        <begin position="1"/>
        <end position="14"/>
    </location>
</feature>
<feature type="transmembrane region" description="Helical; Name=I" evidence="3">
    <location>
        <begin position="15"/>
        <end position="45"/>
    </location>
</feature>
<feature type="topological domain" description="Mitochondrial matrix" evidence="3">
    <location>
        <begin position="46"/>
        <end position="59"/>
    </location>
</feature>
<feature type="transmembrane region" description="Helical; Name=II" evidence="3">
    <location>
        <begin position="60"/>
        <end position="87"/>
    </location>
</feature>
<feature type="topological domain" description="Mitochondrial intermembrane" evidence="3">
    <location>
        <begin position="88"/>
        <end position="230"/>
    </location>
</feature>
<feature type="binding site" evidence="3">
    <location>
        <position position="161"/>
    </location>
    <ligand>
        <name>Cu cation</name>
        <dbReference type="ChEBI" id="CHEBI:23378"/>
        <label>A1</label>
    </ligand>
</feature>
<feature type="binding site" evidence="3">
    <location>
        <position position="196"/>
    </location>
    <ligand>
        <name>Cu cation</name>
        <dbReference type="ChEBI" id="CHEBI:23378"/>
        <label>A1</label>
    </ligand>
</feature>
<feature type="binding site" evidence="3">
    <location>
        <position position="196"/>
    </location>
    <ligand>
        <name>Cu cation</name>
        <dbReference type="ChEBI" id="CHEBI:23378"/>
        <label>A2</label>
    </ligand>
</feature>
<feature type="binding site" evidence="3">
    <location>
        <position position="198"/>
    </location>
    <ligand>
        <name>Cu cation</name>
        <dbReference type="ChEBI" id="CHEBI:23378"/>
        <label>A2</label>
    </ligand>
</feature>
<feature type="binding site" evidence="3">
    <location>
        <position position="198"/>
    </location>
    <ligand>
        <name>Mg(2+)</name>
        <dbReference type="ChEBI" id="CHEBI:18420"/>
        <note>ligand shared with MT-CO1</note>
    </ligand>
</feature>
<feature type="binding site" evidence="3">
    <location>
        <position position="200"/>
    </location>
    <ligand>
        <name>Cu cation</name>
        <dbReference type="ChEBI" id="CHEBI:23378"/>
        <label>A1</label>
    </ligand>
</feature>
<feature type="binding site" evidence="3">
    <location>
        <position position="200"/>
    </location>
    <ligand>
        <name>Cu cation</name>
        <dbReference type="ChEBI" id="CHEBI:23378"/>
        <label>A2</label>
    </ligand>
</feature>
<feature type="binding site" evidence="3">
    <location>
        <position position="204"/>
    </location>
    <ligand>
        <name>Cu cation</name>
        <dbReference type="ChEBI" id="CHEBI:23378"/>
        <label>A2</label>
    </ligand>
</feature>
<feature type="binding site" evidence="3">
    <location>
        <position position="207"/>
    </location>
    <ligand>
        <name>Cu cation</name>
        <dbReference type="ChEBI" id="CHEBI:23378"/>
        <label>A1</label>
    </ligand>
</feature>
<name>COX2_CYPCA</name>
<organism>
    <name type="scientific">Cyprinus carpio</name>
    <name type="common">Common carp</name>
    <dbReference type="NCBI Taxonomy" id="7962"/>
    <lineage>
        <taxon>Eukaryota</taxon>
        <taxon>Metazoa</taxon>
        <taxon>Chordata</taxon>
        <taxon>Craniata</taxon>
        <taxon>Vertebrata</taxon>
        <taxon>Euteleostomi</taxon>
        <taxon>Actinopterygii</taxon>
        <taxon>Neopterygii</taxon>
        <taxon>Teleostei</taxon>
        <taxon>Ostariophysi</taxon>
        <taxon>Cypriniformes</taxon>
        <taxon>Cyprinidae</taxon>
        <taxon>Cyprininae</taxon>
        <taxon>Cyprinus</taxon>
    </lineage>
</organism>
<proteinExistence type="inferred from homology"/>
<protein>
    <recommendedName>
        <fullName>Cytochrome c oxidase subunit 2</fullName>
        <ecNumber>7.1.1.9</ecNumber>
    </recommendedName>
    <alternativeName>
        <fullName>Cytochrome c oxidase polypeptide II</fullName>
    </alternativeName>
</protein>
<evidence type="ECO:0000250" key="1">
    <source>
        <dbReference type="UniProtKB" id="P00403"/>
    </source>
</evidence>
<evidence type="ECO:0000250" key="2">
    <source>
        <dbReference type="UniProtKB" id="P00410"/>
    </source>
</evidence>
<evidence type="ECO:0000250" key="3">
    <source>
        <dbReference type="UniProtKB" id="P68530"/>
    </source>
</evidence>
<evidence type="ECO:0000305" key="4"/>
<reference key="1">
    <citation type="journal article" date="1994" name="J. Mol. Evol.">
        <title>The complete nucleotide sequence and gene organization of carp (Cyprinus carpio) mitochondrial genome.</title>
        <authorList>
            <person name="Chang Y.S."/>
            <person name="Huang F.L."/>
            <person name="Lo T.B."/>
        </authorList>
    </citation>
    <scope>NUCLEOTIDE SEQUENCE [GENOMIC DNA]</scope>
</reference>
<keyword id="KW-0186">Copper</keyword>
<keyword id="KW-0249">Electron transport</keyword>
<keyword id="KW-0460">Magnesium</keyword>
<keyword id="KW-0472">Membrane</keyword>
<keyword id="KW-0479">Metal-binding</keyword>
<keyword id="KW-0496">Mitochondrion</keyword>
<keyword id="KW-0999">Mitochondrion inner membrane</keyword>
<keyword id="KW-1185">Reference proteome</keyword>
<keyword id="KW-0679">Respiratory chain</keyword>
<keyword id="KW-1278">Translocase</keyword>
<keyword id="KW-0812">Transmembrane</keyword>
<keyword id="KW-1133">Transmembrane helix</keyword>
<keyword id="KW-0813">Transport</keyword>
<geneLocation type="mitochondrion"/>
<accession>P24987</accession>
<comment type="function">
    <text evidence="2">Component of the cytochrome c oxidase, the last enzyme in the mitochondrial electron transport chain which drives oxidative phosphorylation. The respiratory chain contains 3 multisubunit complexes succinate dehydrogenase (complex II, CII), ubiquinol-cytochrome c oxidoreductase (cytochrome b-c1 complex, complex III, CIII) and cytochrome c oxidase (complex IV, CIV), that cooperate to transfer electrons derived from NADH and succinate to molecular oxygen, creating an electrochemical gradient over the inner membrane that drives transmembrane transport and the ATP synthase. Cytochrome c oxidase is the component of the respiratory chain that catalyzes the reduction of oxygen to water. Electrons originating from reduced cytochrome c in the intermembrane space (IMS) are transferred via the dinuclear copper A center (CU(A)) of subunit 2 and heme A of subunit 1 to the active site in subunit 1, a binuclear center (BNC) formed by heme A3 and copper B (CU(B)). The BNC reduces molecular oxygen to 2 water molecules using 4 electrons from cytochrome c in the IMS and 4 protons from the mitochondrial matrix.</text>
</comment>
<comment type="catalytic activity">
    <reaction evidence="2">
        <text>4 Fe(II)-[cytochrome c] + O2 + 8 H(+)(in) = 4 Fe(III)-[cytochrome c] + 2 H2O + 4 H(+)(out)</text>
        <dbReference type="Rhea" id="RHEA:11436"/>
        <dbReference type="Rhea" id="RHEA-COMP:10350"/>
        <dbReference type="Rhea" id="RHEA-COMP:14399"/>
        <dbReference type="ChEBI" id="CHEBI:15377"/>
        <dbReference type="ChEBI" id="CHEBI:15378"/>
        <dbReference type="ChEBI" id="CHEBI:15379"/>
        <dbReference type="ChEBI" id="CHEBI:29033"/>
        <dbReference type="ChEBI" id="CHEBI:29034"/>
        <dbReference type="EC" id="7.1.1.9"/>
    </reaction>
    <physiologicalReaction direction="left-to-right" evidence="2">
        <dbReference type="Rhea" id="RHEA:11437"/>
    </physiologicalReaction>
</comment>
<comment type="cofactor">
    <cofactor evidence="3">
        <name>Cu cation</name>
        <dbReference type="ChEBI" id="CHEBI:23378"/>
    </cofactor>
    <text evidence="3">Binds a dinuclear copper A center per subunit.</text>
</comment>
<comment type="subunit">
    <text evidence="1 3">Component of the cytochrome c oxidase (complex IV, CIV), a multisubunit enzyme composed of 14 subunits. The complex is composed of a catalytic core of 3 subunits MT-CO1, MT-CO2 and MT-CO3, encoded in the mitochondrial DNA, and 11 supernumerary subunits COX4I, COX5A, COX5B, COX6A, COX6B, COX6C, COX7A, COX7B, COX7C, COX8 and NDUFA4, which are encoded in the nuclear genome. The complex exists as a monomer or a dimer and forms supercomplexes (SCs) in the inner mitochondrial membrane with NADH-ubiquinone oxidoreductase (complex I, CI) and ubiquinol-cytochrome c oxidoreductase (cytochrome b-c1 complex, complex III, CIII), resulting in different assemblies (supercomplex SCI(1)III(2)IV(1) and megacomplex MCI(2)III(2)IV(2)) (By similarity). Found in a complex with TMEM177, COA6, COX18, COX20, SCO1 and SCO2. Interacts with TMEM177 in a COX20-dependent manner. Interacts with COX20. Interacts with COX16 (By similarity).</text>
</comment>
<comment type="subcellular location">
    <subcellularLocation>
        <location evidence="3">Mitochondrion inner membrane</location>
        <topology evidence="3">Multi-pass membrane protein</topology>
    </subcellularLocation>
</comment>
<comment type="similarity">
    <text evidence="4">Belongs to the cytochrome c oxidase subunit 2 family.</text>
</comment>